<protein>
    <recommendedName>
        <fullName>S-adenosylmethionine synthase 2</fullName>
        <shortName>AdoMet synthase 2</shortName>
        <ecNumber evidence="5">2.5.1.6</ecNumber>
    </recommendedName>
    <alternativeName>
        <fullName>Methionine adenosyltransferase 2</fullName>
        <shortName>MAT 2</shortName>
    </alternativeName>
</protein>
<reference key="1">
    <citation type="submission" date="2005-09" db="EMBL/GenBank/DDBJ databases">
        <title>Full length sequences from Solanum tuberosum cv. Kuras.</title>
        <authorList>
            <person name="Nielsen K.L."/>
            <person name="Welinder K.G."/>
            <person name="Nielsen H.V."/>
            <person name="Emmersen J.M.G."/>
        </authorList>
    </citation>
    <scope>NUCLEOTIDE SEQUENCE [LARGE SCALE MRNA]</scope>
    <source>
        <strain>cv. Kuras</strain>
        <tissue>Tuber</tissue>
    </source>
</reference>
<gene>
    <name type="primary">METK2</name>
</gene>
<sequence length="390" mass="42702">METFLLTSESVNEGHPDKLCDQVSDAILDACLEQDPESKVACETCTKTNMVMVFGEITTKANVDYEKIVRDTCREIGFISADVGLDADNCKVLVNIEQQSPDIAQGVHGHLTKKPEEIGAGDQGHMFGYATDETPELMPLTHVLATKLGAKLTEVRKNKTCPWLRPDGKTQVTVEYKNDNGAMVPIRVHTVLISTQHDETVTNDQIAQDLKEHVIKPVIPAKYLDENTIFHLNPSGRFVIGGPHGDAGLTGRKIIIDTYGGWGAHGGGAFSGKDPTKVDRSGAYIVRQAAKSVVASGLARRCIVQVSYAIGVAEPLSVFVDTYKTGTIPDKDILVLIKENFDFRPGMMSINLDLLRGGNFRYQKTAAYGHFGRDDPDFTWETVKVLKPKA</sequence>
<dbReference type="EC" id="2.5.1.6" evidence="5"/>
<dbReference type="EMBL" id="DQ222503">
    <property type="protein sequence ID" value="ABB02634.1"/>
    <property type="molecule type" value="mRNA"/>
</dbReference>
<dbReference type="RefSeq" id="NP_001305478.1">
    <property type="nucleotide sequence ID" value="NM_001318549.1"/>
</dbReference>
<dbReference type="SMR" id="Q38JH8"/>
<dbReference type="FunCoup" id="Q38JH8">
    <property type="interactions" value="2144"/>
</dbReference>
<dbReference type="STRING" id="4113.Q38JH8"/>
<dbReference type="PaxDb" id="4113-PGSC0003DMT400087679"/>
<dbReference type="GeneID" id="102578902"/>
<dbReference type="KEGG" id="sot:102578902"/>
<dbReference type="eggNOG" id="KOG1506">
    <property type="taxonomic scope" value="Eukaryota"/>
</dbReference>
<dbReference type="InParanoid" id="Q38JH8"/>
<dbReference type="OrthoDB" id="5852090at2759"/>
<dbReference type="UniPathway" id="UPA00315">
    <property type="reaction ID" value="UER00080"/>
</dbReference>
<dbReference type="Proteomes" id="UP000011115">
    <property type="component" value="Unassembled WGS sequence"/>
</dbReference>
<dbReference type="ExpressionAtlas" id="Q38JH8">
    <property type="expression patterns" value="baseline and differential"/>
</dbReference>
<dbReference type="GO" id="GO:0005829">
    <property type="term" value="C:cytosol"/>
    <property type="evidence" value="ECO:0000318"/>
    <property type="project" value="GO_Central"/>
</dbReference>
<dbReference type="GO" id="GO:0005524">
    <property type="term" value="F:ATP binding"/>
    <property type="evidence" value="ECO:0007669"/>
    <property type="project" value="UniProtKB-KW"/>
</dbReference>
<dbReference type="GO" id="GO:0046872">
    <property type="term" value="F:metal ion binding"/>
    <property type="evidence" value="ECO:0007669"/>
    <property type="project" value="UniProtKB-KW"/>
</dbReference>
<dbReference type="GO" id="GO:0004478">
    <property type="term" value="F:methionine adenosyltransferase activity"/>
    <property type="evidence" value="ECO:0000318"/>
    <property type="project" value="GO_Central"/>
</dbReference>
<dbReference type="GO" id="GO:0006730">
    <property type="term" value="P:one-carbon metabolic process"/>
    <property type="evidence" value="ECO:0007669"/>
    <property type="project" value="UniProtKB-KW"/>
</dbReference>
<dbReference type="GO" id="GO:0006556">
    <property type="term" value="P:S-adenosylmethionine biosynthetic process"/>
    <property type="evidence" value="ECO:0000318"/>
    <property type="project" value="GO_Central"/>
</dbReference>
<dbReference type="CDD" id="cd18079">
    <property type="entry name" value="S-AdoMet_synt"/>
    <property type="match status" value="1"/>
</dbReference>
<dbReference type="FunFam" id="3.30.300.10:FF:000001">
    <property type="entry name" value="S-adenosylmethionine synthase"/>
    <property type="match status" value="1"/>
</dbReference>
<dbReference type="FunFam" id="3.30.300.10:FF:000003">
    <property type="entry name" value="S-adenosylmethionine synthase"/>
    <property type="match status" value="1"/>
</dbReference>
<dbReference type="FunFam" id="3.30.300.10:FF:000004">
    <property type="entry name" value="S-adenosylmethionine synthase"/>
    <property type="match status" value="1"/>
</dbReference>
<dbReference type="Gene3D" id="3.30.300.10">
    <property type="match status" value="3"/>
</dbReference>
<dbReference type="HAMAP" id="MF_00086">
    <property type="entry name" value="S_AdoMet_synth1"/>
    <property type="match status" value="1"/>
</dbReference>
<dbReference type="InterPro" id="IPR022631">
    <property type="entry name" value="ADOMET_SYNTHASE_CS"/>
</dbReference>
<dbReference type="InterPro" id="IPR022630">
    <property type="entry name" value="S-AdoMet_synt_C"/>
</dbReference>
<dbReference type="InterPro" id="IPR022629">
    <property type="entry name" value="S-AdoMet_synt_central"/>
</dbReference>
<dbReference type="InterPro" id="IPR022628">
    <property type="entry name" value="S-AdoMet_synt_N"/>
</dbReference>
<dbReference type="InterPro" id="IPR002133">
    <property type="entry name" value="S-AdoMet_synthetase"/>
</dbReference>
<dbReference type="InterPro" id="IPR022636">
    <property type="entry name" value="S-AdoMet_synthetase_sfam"/>
</dbReference>
<dbReference type="NCBIfam" id="TIGR01034">
    <property type="entry name" value="metK"/>
    <property type="match status" value="1"/>
</dbReference>
<dbReference type="PANTHER" id="PTHR11964">
    <property type="entry name" value="S-ADENOSYLMETHIONINE SYNTHETASE"/>
    <property type="match status" value="1"/>
</dbReference>
<dbReference type="Pfam" id="PF02773">
    <property type="entry name" value="S-AdoMet_synt_C"/>
    <property type="match status" value="1"/>
</dbReference>
<dbReference type="Pfam" id="PF02772">
    <property type="entry name" value="S-AdoMet_synt_M"/>
    <property type="match status" value="1"/>
</dbReference>
<dbReference type="Pfam" id="PF00438">
    <property type="entry name" value="S-AdoMet_synt_N"/>
    <property type="match status" value="1"/>
</dbReference>
<dbReference type="PIRSF" id="PIRSF000497">
    <property type="entry name" value="MAT"/>
    <property type="match status" value="1"/>
</dbReference>
<dbReference type="SUPFAM" id="SSF55973">
    <property type="entry name" value="S-adenosylmethionine synthetase"/>
    <property type="match status" value="3"/>
</dbReference>
<dbReference type="PROSITE" id="PS00376">
    <property type="entry name" value="ADOMET_SYNTHASE_1"/>
    <property type="match status" value="1"/>
</dbReference>
<dbReference type="PROSITE" id="PS00377">
    <property type="entry name" value="ADOMET_SYNTHASE_2"/>
    <property type="match status" value="1"/>
</dbReference>
<accession>Q38JH8</accession>
<proteinExistence type="evidence at transcript level"/>
<comment type="function">
    <text evidence="5">Catalyzes the formation of S-adenosylmethionine from methionine and ATP. The reaction comprises two steps that are both catalyzed by the same enzyme: formation of S-adenosylmethionine (AdoMet) and triphosphate, and subsequent hydrolysis of the triphosphate.</text>
</comment>
<comment type="catalytic activity">
    <reaction evidence="5">
        <text>L-methionine + ATP + H2O = S-adenosyl-L-methionine + phosphate + diphosphate</text>
        <dbReference type="Rhea" id="RHEA:21080"/>
        <dbReference type="ChEBI" id="CHEBI:15377"/>
        <dbReference type="ChEBI" id="CHEBI:30616"/>
        <dbReference type="ChEBI" id="CHEBI:33019"/>
        <dbReference type="ChEBI" id="CHEBI:43474"/>
        <dbReference type="ChEBI" id="CHEBI:57844"/>
        <dbReference type="ChEBI" id="CHEBI:59789"/>
        <dbReference type="EC" id="2.5.1.6"/>
    </reaction>
</comment>
<comment type="cofactor">
    <cofactor evidence="5">
        <name>Mn(2+)</name>
        <dbReference type="ChEBI" id="CHEBI:29035"/>
    </cofactor>
    <cofactor evidence="5">
        <name>Mg(2+)</name>
        <dbReference type="ChEBI" id="CHEBI:18420"/>
    </cofactor>
    <cofactor evidence="5">
        <name>Co(2+)</name>
        <dbReference type="ChEBI" id="CHEBI:48828"/>
    </cofactor>
    <text evidence="3 5">Binds 2 divalent ions per subunit. The metal ions interact primarily with the substrate (By similarity). Can utilize magnesium, manganese or cobalt (in vitro) (By similarity).</text>
</comment>
<comment type="cofactor">
    <cofactor evidence="5">
        <name>K(+)</name>
        <dbReference type="ChEBI" id="CHEBI:29103"/>
    </cofactor>
    <text evidence="3">Binds 1 potassium ion per subunit. The potassium ion interacts primarily with the substrate (By similarity).</text>
</comment>
<comment type="pathway">
    <text evidence="5">Amino-acid biosynthesis; S-adenosyl-L-methionine biosynthesis; S-adenosyl-L-methionine from L-methionine: step 1/1.</text>
</comment>
<comment type="subunit">
    <text evidence="1">Homotetramer.</text>
</comment>
<comment type="subcellular location">
    <subcellularLocation>
        <location evidence="1">Cytoplasm</location>
    </subcellularLocation>
</comment>
<comment type="similarity">
    <text evidence="6">Belongs to the AdoMet synthase family.</text>
</comment>
<organism>
    <name type="scientific">Solanum tuberosum</name>
    <name type="common">Potato</name>
    <dbReference type="NCBI Taxonomy" id="4113"/>
    <lineage>
        <taxon>Eukaryota</taxon>
        <taxon>Viridiplantae</taxon>
        <taxon>Streptophyta</taxon>
        <taxon>Embryophyta</taxon>
        <taxon>Tracheophyta</taxon>
        <taxon>Spermatophyta</taxon>
        <taxon>Magnoliopsida</taxon>
        <taxon>eudicotyledons</taxon>
        <taxon>Gunneridae</taxon>
        <taxon>Pentapetalae</taxon>
        <taxon>asterids</taxon>
        <taxon>lamiids</taxon>
        <taxon>Solanales</taxon>
        <taxon>Solanaceae</taxon>
        <taxon>Solanoideae</taxon>
        <taxon>Solaneae</taxon>
        <taxon>Solanum</taxon>
    </lineage>
</organism>
<evidence type="ECO:0000250" key="1"/>
<evidence type="ECO:0000250" key="2">
    <source>
        <dbReference type="UniProtKB" id="P0A817"/>
    </source>
</evidence>
<evidence type="ECO:0000250" key="3">
    <source>
        <dbReference type="UniProtKB" id="P13444"/>
    </source>
</evidence>
<evidence type="ECO:0000250" key="4">
    <source>
        <dbReference type="UniProtKB" id="Q00266"/>
    </source>
</evidence>
<evidence type="ECO:0000250" key="5">
    <source>
        <dbReference type="UniProtKB" id="Q96551"/>
    </source>
</evidence>
<evidence type="ECO:0000305" key="6"/>
<name>METK2_SOLTU</name>
<feature type="chain" id="PRO_0000363049" description="S-adenosylmethionine synthase 2">
    <location>
        <begin position="1"/>
        <end position="390"/>
    </location>
</feature>
<feature type="binding site" evidence="3">
    <location>
        <position position="9"/>
    </location>
    <ligand>
        <name>Mg(2+)</name>
        <dbReference type="ChEBI" id="CHEBI:18420"/>
    </ligand>
</feature>
<feature type="binding site" description="in other chain" evidence="4">
    <location>
        <position position="15"/>
    </location>
    <ligand>
        <name>ATP</name>
        <dbReference type="ChEBI" id="CHEBI:30616"/>
        <note>ligand shared between two neighboring subunits</note>
    </ligand>
</feature>
<feature type="binding site" evidence="2">
    <location>
        <position position="43"/>
    </location>
    <ligand>
        <name>K(+)</name>
        <dbReference type="ChEBI" id="CHEBI:29103"/>
    </ligand>
</feature>
<feature type="binding site" description="in other chain" evidence="2">
    <location>
        <position position="56"/>
    </location>
    <ligand>
        <name>L-methionine</name>
        <dbReference type="ChEBI" id="CHEBI:57844"/>
        <note>ligand shared between two neighboring subunits</note>
    </ligand>
</feature>
<feature type="binding site" description="in other chain" evidence="2">
    <location>
        <position position="99"/>
    </location>
    <ligand>
        <name>L-methionine</name>
        <dbReference type="ChEBI" id="CHEBI:57844"/>
        <note>ligand shared between two neighboring subunits</note>
    </ligand>
</feature>
<feature type="binding site" description="in other chain" evidence="4">
    <location>
        <begin position="167"/>
        <end position="169"/>
    </location>
    <ligand>
        <name>ATP</name>
        <dbReference type="ChEBI" id="CHEBI:30616"/>
        <note>ligand shared between two neighboring subunits</note>
    </ligand>
</feature>
<feature type="binding site" description="in other chain" evidence="4">
    <location>
        <begin position="235"/>
        <end position="238"/>
    </location>
    <ligand>
        <name>ATP</name>
        <dbReference type="ChEBI" id="CHEBI:30616"/>
        <note>ligand shared between two neighboring subunits</note>
    </ligand>
</feature>
<feature type="binding site" description="in other chain" evidence="4">
    <location>
        <position position="246"/>
    </location>
    <ligand>
        <name>ATP</name>
        <dbReference type="ChEBI" id="CHEBI:30616"/>
        <note>ligand shared between two neighboring subunits</note>
    </ligand>
</feature>
<feature type="binding site" evidence="2">
    <location>
        <position position="246"/>
    </location>
    <ligand>
        <name>L-methionine</name>
        <dbReference type="ChEBI" id="CHEBI:57844"/>
        <note>ligand shared between two neighboring subunits</note>
    </ligand>
</feature>
<feature type="binding site" description="in other chain" evidence="2">
    <location>
        <begin position="252"/>
        <end position="253"/>
    </location>
    <ligand>
        <name>ATP</name>
        <dbReference type="ChEBI" id="CHEBI:30616"/>
        <note>ligand shared between two neighboring subunits</note>
    </ligand>
</feature>
<feature type="binding site" evidence="2">
    <location>
        <position position="269"/>
    </location>
    <ligand>
        <name>ATP</name>
        <dbReference type="ChEBI" id="CHEBI:30616"/>
        <note>ligand shared between two neighboring subunits</note>
    </ligand>
</feature>
<feature type="binding site" evidence="2">
    <location>
        <position position="273"/>
    </location>
    <ligand>
        <name>ATP</name>
        <dbReference type="ChEBI" id="CHEBI:30616"/>
        <note>ligand shared between two neighboring subunits</note>
    </ligand>
</feature>
<feature type="binding site" evidence="3">
    <location>
        <position position="277"/>
    </location>
    <ligand>
        <name>ATP</name>
        <dbReference type="ChEBI" id="CHEBI:30616"/>
        <note>ligand shared between two neighboring subunits</note>
    </ligand>
</feature>
<feature type="binding site" description="in other chain" evidence="2">
    <location>
        <position position="277"/>
    </location>
    <ligand>
        <name>L-methionine</name>
        <dbReference type="ChEBI" id="CHEBI:57844"/>
        <note>ligand shared between two neighboring subunits</note>
    </ligand>
</feature>
<keyword id="KW-0067">ATP-binding</keyword>
<keyword id="KW-0170">Cobalt</keyword>
<keyword id="KW-0963">Cytoplasm</keyword>
<keyword id="KW-0460">Magnesium</keyword>
<keyword id="KW-0479">Metal-binding</keyword>
<keyword id="KW-0547">Nucleotide-binding</keyword>
<keyword id="KW-0554">One-carbon metabolism</keyword>
<keyword id="KW-0630">Potassium</keyword>
<keyword id="KW-1185">Reference proteome</keyword>
<keyword id="KW-0808">Transferase</keyword>